<gene>
    <name evidence="1" type="primary">rps11</name>
</gene>
<protein>
    <recommendedName>
        <fullName evidence="1">Small ribosomal subunit protein uS11c</fullName>
    </recommendedName>
    <alternativeName>
        <fullName evidence="3">30S ribosomal protein S11, chloroplastic</fullName>
    </alternativeName>
</protein>
<proteinExistence type="inferred from homology"/>
<reference key="1">
    <citation type="journal article" date="2002" name="DNA Res.">
        <title>Evolutionary re-organisation of a large operon in adzuki bean chloroplast DNA caused by inverted repeat movement.</title>
        <authorList>
            <person name="Perry A.S."/>
            <person name="Brennan S."/>
            <person name="Murphy D.J."/>
            <person name="Kavanagh T.A."/>
            <person name="Wolfe K.H."/>
        </authorList>
    </citation>
    <scope>NUCLEOTIDE SEQUENCE [GENOMIC DNA]</scope>
    <source>
        <strain>cv. Erimo-shozu</strain>
    </source>
</reference>
<dbReference type="EMBL" id="AF536226">
    <property type="protein sequence ID" value="AAN04897.1"/>
    <property type="molecule type" value="Genomic_DNA"/>
</dbReference>
<dbReference type="RefSeq" id="YP_007889757.1">
    <property type="nucleotide sequence ID" value="NC_021091.1"/>
</dbReference>
<dbReference type="SMR" id="Q8MCA0"/>
<dbReference type="GeneID" id="15382684"/>
<dbReference type="KEGG" id="var:15382684"/>
<dbReference type="OrthoDB" id="1338064at2759"/>
<dbReference type="GO" id="GO:0009507">
    <property type="term" value="C:chloroplast"/>
    <property type="evidence" value="ECO:0007669"/>
    <property type="project" value="UniProtKB-SubCell"/>
</dbReference>
<dbReference type="GO" id="GO:1990904">
    <property type="term" value="C:ribonucleoprotein complex"/>
    <property type="evidence" value="ECO:0007669"/>
    <property type="project" value="UniProtKB-KW"/>
</dbReference>
<dbReference type="GO" id="GO:0005840">
    <property type="term" value="C:ribosome"/>
    <property type="evidence" value="ECO:0007669"/>
    <property type="project" value="UniProtKB-KW"/>
</dbReference>
<dbReference type="GO" id="GO:0019843">
    <property type="term" value="F:rRNA binding"/>
    <property type="evidence" value="ECO:0007669"/>
    <property type="project" value="UniProtKB-UniRule"/>
</dbReference>
<dbReference type="GO" id="GO:0003735">
    <property type="term" value="F:structural constituent of ribosome"/>
    <property type="evidence" value="ECO:0007669"/>
    <property type="project" value="InterPro"/>
</dbReference>
<dbReference type="GO" id="GO:0006412">
    <property type="term" value="P:translation"/>
    <property type="evidence" value="ECO:0007669"/>
    <property type="project" value="UniProtKB-UniRule"/>
</dbReference>
<dbReference type="FunFam" id="3.30.420.80:FF:000003">
    <property type="entry name" value="30S ribosomal protein S11, chloroplastic"/>
    <property type="match status" value="1"/>
</dbReference>
<dbReference type="Gene3D" id="3.30.420.80">
    <property type="entry name" value="Ribosomal protein S11"/>
    <property type="match status" value="1"/>
</dbReference>
<dbReference type="HAMAP" id="MF_01310">
    <property type="entry name" value="Ribosomal_uS11"/>
    <property type="match status" value="1"/>
</dbReference>
<dbReference type="InterPro" id="IPR001971">
    <property type="entry name" value="Ribosomal_uS11"/>
</dbReference>
<dbReference type="InterPro" id="IPR019981">
    <property type="entry name" value="Ribosomal_uS11_bac-type"/>
</dbReference>
<dbReference type="InterPro" id="IPR018102">
    <property type="entry name" value="Ribosomal_uS11_CS"/>
</dbReference>
<dbReference type="InterPro" id="IPR036967">
    <property type="entry name" value="Ribosomal_uS11_sf"/>
</dbReference>
<dbReference type="NCBIfam" id="NF003698">
    <property type="entry name" value="PRK05309.1"/>
    <property type="match status" value="1"/>
</dbReference>
<dbReference type="NCBIfam" id="TIGR03632">
    <property type="entry name" value="uS11_bact"/>
    <property type="match status" value="1"/>
</dbReference>
<dbReference type="PANTHER" id="PTHR11759">
    <property type="entry name" value="40S RIBOSOMAL PROTEIN S14/30S RIBOSOMAL PROTEIN S11"/>
    <property type="match status" value="1"/>
</dbReference>
<dbReference type="Pfam" id="PF00411">
    <property type="entry name" value="Ribosomal_S11"/>
    <property type="match status" value="1"/>
</dbReference>
<dbReference type="PIRSF" id="PIRSF002131">
    <property type="entry name" value="Ribosomal_S11"/>
    <property type="match status" value="1"/>
</dbReference>
<dbReference type="SUPFAM" id="SSF53137">
    <property type="entry name" value="Translational machinery components"/>
    <property type="match status" value="1"/>
</dbReference>
<dbReference type="PROSITE" id="PS00054">
    <property type="entry name" value="RIBOSOMAL_S11"/>
    <property type="match status" value="1"/>
</dbReference>
<comment type="subunit">
    <text evidence="1">Part of the 30S ribosomal subunit.</text>
</comment>
<comment type="subcellular location">
    <subcellularLocation>
        <location>Plastid</location>
        <location>Chloroplast</location>
    </subcellularLocation>
</comment>
<comment type="similarity">
    <text evidence="1">Belongs to the universal ribosomal protein uS11 family.</text>
</comment>
<evidence type="ECO:0000255" key="1">
    <source>
        <dbReference type="HAMAP-Rule" id="MF_01310"/>
    </source>
</evidence>
<evidence type="ECO:0000256" key="2">
    <source>
        <dbReference type="SAM" id="MobiDB-lite"/>
    </source>
</evidence>
<evidence type="ECO:0000305" key="3"/>
<accession>Q8MCA0</accession>
<organism>
    <name type="scientific">Phaseolus angularis</name>
    <name type="common">Azuki bean</name>
    <name type="synonym">Vigna angularis</name>
    <dbReference type="NCBI Taxonomy" id="3914"/>
    <lineage>
        <taxon>Eukaryota</taxon>
        <taxon>Viridiplantae</taxon>
        <taxon>Streptophyta</taxon>
        <taxon>Embryophyta</taxon>
        <taxon>Tracheophyta</taxon>
        <taxon>Spermatophyta</taxon>
        <taxon>Magnoliopsida</taxon>
        <taxon>eudicotyledons</taxon>
        <taxon>Gunneridae</taxon>
        <taxon>Pentapetalae</taxon>
        <taxon>rosids</taxon>
        <taxon>fabids</taxon>
        <taxon>Fabales</taxon>
        <taxon>Fabaceae</taxon>
        <taxon>Papilionoideae</taxon>
        <taxon>50 kb inversion clade</taxon>
        <taxon>NPAAA clade</taxon>
        <taxon>indigoferoid/millettioid clade</taxon>
        <taxon>Phaseoleae</taxon>
        <taxon>Vigna</taxon>
    </lineage>
</organism>
<sequence length="138" mass="14993">MAKSIPKTGSRKNVRIGSRNQTRKIPKGIIHVQASFNNTIVTITDVRGRVISWSSAGTCGFKGTRRGTPFAAQTAAGNAIRTVSDQGMQRAEIMIKGPGLGRDAALRAIRRSGILLNFIRDVTPMPHNGCRSPKKRRV</sequence>
<geneLocation type="chloroplast"/>
<keyword id="KW-0150">Chloroplast</keyword>
<keyword id="KW-0934">Plastid</keyword>
<keyword id="KW-0687">Ribonucleoprotein</keyword>
<keyword id="KW-0689">Ribosomal protein</keyword>
<keyword id="KW-0694">RNA-binding</keyword>
<keyword id="KW-0699">rRNA-binding</keyword>
<name>RR11_PHAAN</name>
<feature type="chain" id="PRO_0000123319" description="Small ribosomal subunit protein uS11c">
    <location>
        <begin position="1"/>
        <end position="138"/>
    </location>
</feature>
<feature type="region of interest" description="Disordered" evidence="2">
    <location>
        <begin position="1"/>
        <end position="22"/>
    </location>
</feature>